<evidence type="ECO:0000250" key="1"/>
<evidence type="ECO:0000305" key="2"/>
<proteinExistence type="evidence at transcript level"/>
<protein>
    <recommendedName>
        <fullName>Superoxide dismutase [Cu-Zn]</fullName>
        <ecNumber>1.15.1.1</ecNumber>
    </recommendedName>
</protein>
<dbReference type="EC" id="1.15.1.1"/>
<dbReference type="EMBL" id="Y13610">
    <property type="protein sequence ID" value="CAA73929.1"/>
    <property type="molecule type" value="mRNA"/>
</dbReference>
<dbReference type="PIR" id="T09778">
    <property type="entry name" value="T09778"/>
</dbReference>
<dbReference type="SMR" id="O65768"/>
<dbReference type="OrthoDB" id="2015551at2759"/>
<dbReference type="GO" id="GO:0005737">
    <property type="term" value="C:cytoplasm"/>
    <property type="evidence" value="ECO:0007669"/>
    <property type="project" value="UniProtKB-SubCell"/>
</dbReference>
<dbReference type="GO" id="GO:0005507">
    <property type="term" value="F:copper ion binding"/>
    <property type="evidence" value="ECO:0007669"/>
    <property type="project" value="InterPro"/>
</dbReference>
<dbReference type="GO" id="GO:0004784">
    <property type="term" value="F:superoxide dismutase activity"/>
    <property type="evidence" value="ECO:0007669"/>
    <property type="project" value="UniProtKB-EC"/>
</dbReference>
<dbReference type="CDD" id="cd00305">
    <property type="entry name" value="Cu-Zn_Superoxide_Dismutase"/>
    <property type="match status" value="1"/>
</dbReference>
<dbReference type="FunFam" id="2.60.40.200:FF:000001">
    <property type="entry name" value="Superoxide dismutase [Cu-Zn]"/>
    <property type="match status" value="1"/>
</dbReference>
<dbReference type="Gene3D" id="2.60.40.200">
    <property type="entry name" value="Superoxide dismutase, copper/zinc binding domain"/>
    <property type="match status" value="1"/>
</dbReference>
<dbReference type="InterPro" id="IPR036423">
    <property type="entry name" value="SOD-like_Cu/Zn_dom_sf"/>
</dbReference>
<dbReference type="InterPro" id="IPR024134">
    <property type="entry name" value="SOD_Cu/Zn_/chaperone"/>
</dbReference>
<dbReference type="InterPro" id="IPR018152">
    <property type="entry name" value="SOD_Cu/Zn_BS"/>
</dbReference>
<dbReference type="InterPro" id="IPR001424">
    <property type="entry name" value="SOD_Cu_Zn_dom"/>
</dbReference>
<dbReference type="PANTHER" id="PTHR10003">
    <property type="entry name" value="SUPEROXIDE DISMUTASE CU-ZN -RELATED"/>
    <property type="match status" value="1"/>
</dbReference>
<dbReference type="Pfam" id="PF00080">
    <property type="entry name" value="Sod_Cu"/>
    <property type="match status" value="1"/>
</dbReference>
<dbReference type="PRINTS" id="PR00068">
    <property type="entry name" value="CUZNDISMTASE"/>
</dbReference>
<dbReference type="SUPFAM" id="SSF49329">
    <property type="entry name" value="Cu,Zn superoxide dismutase-like"/>
    <property type="match status" value="1"/>
</dbReference>
<dbReference type="PROSITE" id="PS00087">
    <property type="entry name" value="SOD_CU_ZN_1"/>
    <property type="match status" value="1"/>
</dbReference>
<dbReference type="PROSITE" id="PS00332">
    <property type="entry name" value="SOD_CU_ZN_2"/>
    <property type="match status" value="1"/>
</dbReference>
<name>SODC_CARPA</name>
<organism>
    <name type="scientific">Carica papaya</name>
    <name type="common">Papaya</name>
    <dbReference type="NCBI Taxonomy" id="3649"/>
    <lineage>
        <taxon>Eukaryota</taxon>
        <taxon>Viridiplantae</taxon>
        <taxon>Streptophyta</taxon>
        <taxon>Embryophyta</taxon>
        <taxon>Tracheophyta</taxon>
        <taxon>Spermatophyta</taxon>
        <taxon>Magnoliopsida</taxon>
        <taxon>eudicotyledons</taxon>
        <taxon>Gunneridae</taxon>
        <taxon>Pentapetalae</taxon>
        <taxon>rosids</taxon>
        <taxon>malvids</taxon>
        <taxon>Brassicales</taxon>
        <taxon>Caricaceae</taxon>
        <taxon>Carica</taxon>
    </lineage>
</organism>
<reference key="1">
    <citation type="journal article" date="1998" name="J. Agric. Food Chem.">
        <title>Molecular cloning of a cDNA encoding copper/zinc superoxide dismutase from papaya fruit and overexpression in Escherichia coli.</title>
        <authorList>
            <person name="Lin M.T."/>
            <person name="Kuo T.J."/>
            <person name="Lin C.T."/>
        </authorList>
    </citation>
    <scope>NUCLEOTIDE SEQUENCE [MRNA]</scope>
    <source>
        <strain>cv. Tainong 2</strain>
    </source>
</reference>
<feature type="chain" id="PRO_0000164136" description="Superoxide dismutase [Cu-Zn]">
    <location>
        <begin position="1"/>
        <end position="152"/>
    </location>
</feature>
<feature type="binding site" evidence="1">
    <location>
        <position position="45"/>
    </location>
    <ligand>
        <name>Cu cation</name>
        <dbReference type="ChEBI" id="CHEBI:23378"/>
        <note>catalytic</note>
    </ligand>
</feature>
<feature type="binding site" evidence="1">
    <location>
        <position position="47"/>
    </location>
    <ligand>
        <name>Cu cation</name>
        <dbReference type="ChEBI" id="CHEBI:23378"/>
        <note>catalytic</note>
    </ligand>
</feature>
<feature type="binding site" evidence="1">
    <location>
        <position position="62"/>
    </location>
    <ligand>
        <name>Cu cation</name>
        <dbReference type="ChEBI" id="CHEBI:23378"/>
        <note>catalytic</note>
    </ligand>
</feature>
<feature type="binding site" evidence="1">
    <location>
        <position position="62"/>
    </location>
    <ligand>
        <name>Zn(2+)</name>
        <dbReference type="ChEBI" id="CHEBI:29105"/>
        <note>structural</note>
    </ligand>
</feature>
<feature type="binding site" evidence="1">
    <location>
        <position position="70"/>
    </location>
    <ligand>
        <name>Zn(2+)</name>
        <dbReference type="ChEBI" id="CHEBI:29105"/>
        <note>structural</note>
    </ligand>
</feature>
<feature type="binding site" evidence="1">
    <location>
        <position position="79"/>
    </location>
    <ligand>
        <name>Zn(2+)</name>
        <dbReference type="ChEBI" id="CHEBI:29105"/>
        <note>structural</note>
    </ligand>
</feature>
<feature type="binding site" evidence="1">
    <location>
        <position position="82"/>
    </location>
    <ligand>
        <name>Zn(2+)</name>
        <dbReference type="ChEBI" id="CHEBI:29105"/>
        <note>structural</note>
    </ligand>
</feature>
<feature type="binding site" evidence="1">
    <location>
        <position position="119"/>
    </location>
    <ligand>
        <name>Cu cation</name>
        <dbReference type="ChEBI" id="CHEBI:23378"/>
        <note>catalytic</note>
    </ligand>
</feature>
<feature type="disulfide bond" evidence="1">
    <location>
        <begin position="56"/>
        <end position="145"/>
    </location>
</feature>
<comment type="function">
    <text>Destroys radicals which are normally produced within the cells and which are toxic to biological systems.</text>
</comment>
<comment type="catalytic activity">
    <reaction>
        <text>2 superoxide + 2 H(+) = H2O2 + O2</text>
        <dbReference type="Rhea" id="RHEA:20696"/>
        <dbReference type="ChEBI" id="CHEBI:15378"/>
        <dbReference type="ChEBI" id="CHEBI:15379"/>
        <dbReference type="ChEBI" id="CHEBI:16240"/>
        <dbReference type="ChEBI" id="CHEBI:18421"/>
        <dbReference type="EC" id="1.15.1.1"/>
    </reaction>
</comment>
<comment type="cofactor">
    <cofactor evidence="1">
        <name>Cu cation</name>
        <dbReference type="ChEBI" id="CHEBI:23378"/>
    </cofactor>
    <text evidence="1">Binds 1 copper ion per subunit.</text>
</comment>
<comment type="cofactor">
    <cofactor evidence="1">
        <name>Zn(2+)</name>
        <dbReference type="ChEBI" id="CHEBI:29105"/>
    </cofactor>
    <text evidence="1">Binds 1 zinc ion per subunit.</text>
</comment>
<comment type="subunit">
    <text evidence="1">Homodimer.</text>
</comment>
<comment type="subcellular location">
    <subcellularLocation>
        <location>Cytoplasm</location>
    </subcellularLocation>
</comment>
<comment type="similarity">
    <text evidence="2">Belongs to the Cu-Zn superoxide dismutase family.</text>
</comment>
<keyword id="KW-0049">Antioxidant</keyword>
<keyword id="KW-0186">Copper</keyword>
<keyword id="KW-0963">Cytoplasm</keyword>
<keyword id="KW-1015">Disulfide bond</keyword>
<keyword id="KW-0479">Metal-binding</keyword>
<keyword id="KW-0560">Oxidoreductase</keyword>
<keyword id="KW-0862">Zinc</keyword>
<accession>O65768</accession>
<sequence>MVKAVAVLSSSEGVSGTIFFTQAADGPTTVTGEISGLKPGHHGFHVHALGDTTNGCMSTGPHFNPAGKEHGAPEDDIRHAGDLGNVNVGDDGKVSFSIIDSQIPLTGPNSIVGRAVVVHADPDDLGKGGHELSKTTGNAGGRVACGVIGLQG</sequence>
<gene>
    <name type="primary">SODCC</name>
</gene>